<accession>Q5HAM0</accession>
<accession>Q5FDD3</accession>
<dbReference type="EC" id="1.1.1.94" evidence="1"/>
<dbReference type="EMBL" id="CR767821">
    <property type="protein sequence ID" value="CAH58392.1"/>
    <property type="molecule type" value="Genomic_DNA"/>
</dbReference>
<dbReference type="EMBL" id="CR925678">
    <property type="protein sequence ID" value="CAI27186.1"/>
    <property type="molecule type" value="Genomic_DNA"/>
</dbReference>
<dbReference type="RefSeq" id="WP_011155340.1">
    <property type="nucleotide sequence ID" value="NC_005295.2"/>
</dbReference>
<dbReference type="SMR" id="Q5HAM0"/>
<dbReference type="GeneID" id="33058187"/>
<dbReference type="KEGG" id="eru:Erum6600"/>
<dbReference type="KEGG" id="erw:ERWE_CDS_06920"/>
<dbReference type="eggNOG" id="COG0240">
    <property type="taxonomic scope" value="Bacteria"/>
</dbReference>
<dbReference type="HOGENOM" id="CLU_033449_0_0_5"/>
<dbReference type="UniPathway" id="UPA00940"/>
<dbReference type="Proteomes" id="UP000001021">
    <property type="component" value="Chromosome"/>
</dbReference>
<dbReference type="GO" id="GO:0005829">
    <property type="term" value="C:cytosol"/>
    <property type="evidence" value="ECO:0007669"/>
    <property type="project" value="TreeGrafter"/>
</dbReference>
<dbReference type="GO" id="GO:0047952">
    <property type="term" value="F:glycerol-3-phosphate dehydrogenase [NAD(P)+] activity"/>
    <property type="evidence" value="ECO:0007669"/>
    <property type="project" value="UniProtKB-UniRule"/>
</dbReference>
<dbReference type="GO" id="GO:0051287">
    <property type="term" value="F:NAD binding"/>
    <property type="evidence" value="ECO:0007669"/>
    <property type="project" value="InterPro"/>
</dbReference>
<dbReference type="GO" id="GO:0005975">
    <property type="term" value="P:carbohydrate metabolic process"/>
    <property type="evidence" value="ECO:0007669"/>
    <property type="project" value="InterPro"/>
</dbReference>
<dbReference type="GO" id="GO:0046167">
    <property type="term" value="P:glycerol-3-phosphate biosynthetic process"/>
    <property type="evidence" value="ECO:0007669"/>
    <property type="project" value="UniProtKB-UniRule"/>
</dbReference>
<dbReference type="GO" id="GO:0046168">
    <property type="term" value="P:glycerol-3-phosphate catabolic process"/>
    <property type="evidence" value="ECO:0007669"/>
    <property type="project" value="InterPro"/>
</dbReference>
<dbReference type="GO" id="GO:0006650">
    <property type="term" value="P:glycerophospholipid metabolic process"/>
    <property type="evidence" value="ECO:0007669"/>
    <property type="project" value="UniProtKB-UniRule"/>
</dbReference>
<dbReference type="GO" id="GO:0008654">
    <property type="term" value="P:phospholipid biosynthetic process"/>
    <property type="evidence" value="ECO:0007669"/>
    <property type="project" value="UniProtKB-KW"/>
</dbReference>
<dbReference type="FunFam" id="3.40.50.720:FF:000019">
    <property type="entry name" value="Glycerol-3-phosphate dehydrogenase [NAD(P)+]"/>
    <property type="match status" value="1"/>
</dbReference>
<dbReference type="Gene3D" id="1.10.1040.10">
    <property type="entry name" value="N-(1-d-carboxylethyl)-l-norvaline Dehydrogenase, domain 2"/>
    <property type="match status" value="1"/>
</dbReference>
<dbReference type="Gene3D" id="3.40.50.720">
    <property type="entry name" value="NAD(P)-binding Rossmann-like Domain"/>
    <property type="match status" value="1"/>
</dbReference>
<dbReference type="HAMAP" id="MF_00394">
    <property type="entry name" value="NAD_Glyc3P_dehydrog"/>
    <property type="match status" value="1"/>
</dbReference>
<dbReference type="InterPro" id="IPR008927">
    <property type="entry name" value="6-PGluconate_DH-like_C_sf"/>
</dbReference>
<dbReference type="InterPro" id="IPR013328">
    <property type="entry name" value="6PGD_dom2"/>
</dbReference>
<dbReference type="InterPro" id="IPR006168">
    <property type="entry name" value="G3P_DH_NAD-dep"/>
</dbReference>
<dbReference type="InterPro" id="IPR006109">
    <property type="entry name" value="G3P_DH_NAD-dep_C"/>
</dbReference>
<dbReference type="InterPro" id="IPR011128">
    <property type="entry name" value="G3P_DH_NAD-dep_N"/>
</dbReference>
<dbReference type="InterPro" id="IPR036291">
    <property type="entry name" value="NAD(P)-bd_dom_sf"/>
</dbReference>
<dbReference type="NCBIfam" id="NF000940">
    <property type="entry name" value="PRK00094.1-2"/>
    <property type="match status" value="1"/>
</dbReference>
<dbReference type="NCBIfam" id="NF000942">
    <property type="entry name" value="PRK00094.1-4"/>
    <property type="match status" value="1"/>
</dbReference>
<dbReference type="NCBIfam" id="NF011213">
    <property type="entry name" value="PRK14620.1"/>
    <property type="match status" value="1"/>
</dbReference>
<dbReference type="PANTHER" id="PTHR11728">
    <property type="entry name" value="GLYCEROL-3-PHOSPHATE DEHYDROGENASE"/>
    <property type="match status" value="1"/>
</dbReference>
<dbReference type="PANTHER" id="PTHR11728:SF1">
    <property type="entry name" value="GLYCEROL-3-PHOSPHATE DEHYDROGENASE [NAD(+)] 2, CHLOROPLASTIC"/>
    <property type="match status" value="1"/>
</dbReference>
<dbReference type="Pfam" id="PF07479">
    <property type="entry name" value="NAD_Gly3P_dh_C"/>
    <property type="match status" value="1"/>
</dbReference>
<dbReference type="Pfam" id="PF01210">
    <property type="entry name" value="NAD_Gly3P_dh_N"/>
    <property type="match status" value="1"/>
</dbReference>
<dbReference type="PIRSF" id="PIRSF000114">
    <property type="entry name" value="Glycerol-3-P_dh"/>
    <property type="match status" value="1"/>
</dbReference>
<dbReference type="PRINTS" id="PR00077">
    <property type="entry name" value="GPDHDRGNASE"/>
</dbReference>
<dbReference type="SUPFAM" id="SSF48179">
    <property type="entry name" value="6-phosphogluconate dehydrogenase C-terminal domain-like"/>
    <property type="match status" value="1"/>
</dbReference>
<dbReference type="SUPFAM" id="SSF51735">
    <property type="entry name" value="NAD(P)-binding Rossmann-fold domains"/>
    <property type="match status" value="1"/>
</dbReference>
<dbReference type="PROSITE" id="PS00957">
    <property type="entry name" value="NAD_G3PDH"/>
    <property type="match status" value="1"/>
</dbReference>
<reference key="1">
    <citation type="journal article" date="2005" name="Proc. Natl. Acad. Sci. U.S.A.">
        <title>The genome of the heartwater agent Ehrlichia ruminantium contains multiple tandem repeats of actively variable copy number.</title>
        <authorList>
            <person name="Collins N.E."/>
            <person name="Liebenberg J."/>
            <person name="de Villiers E.P."/>
            <person name="Brayton K.A."/>
            <person name="Louw E."/>
            <person name="Pretorius A."/>
            <person name="Faber F.E."/>
            <person name="van Heerden H."/>
            <person name="Josemans A."/>
            <person name="van Kleef M."/>
            <person name="Steyn H.C."/>
            <person name="van Strijp M.F."/>
            <person name="Zweygarth E."/>
            <person name="Jongejan F."/>
            <person name="Maillard J.C."/>
            <person name="Berthier D."/>
            <person name="Botha M."/>
            <person name="Joubert F."/>
            <person name="Corton C.H."/>
            <person name="Thomson N.R."/>
            <person name="Allsopp M.T."/>
            <person name="Allsopp B.A."/>
        </authorList>
    </citation>
    <scope>NUCLEOTIDE SEQUENCE [LARGE SCALE GENOMIC DNA]</scope>
    <source>
        <strain>Welgevonden</strain>
    </source>
</reference>
<reference key="2">
    <citation type="journal article" date="2006" name="J. Bacteriol.">
        <title>Comparative genomic analysis of three strains of Ehrlichia ruminantium reveals an active process of genome size plasticity.</title>
        <authorList>
            <person name="Frutos R."/>
            <person name="Viari A."/>
            <person name="Ferraz C."/>
            <person name="Morgat A."/>
            <person name="Eychenie S."/>
            <person name="Kandassamy Y."/>
            <person name="Chantal I."/>
            <person name="Bensaid A."/>
            <person name="Coissac E."/>
            <person name="Vachiery N."/>
            <person name="Demaille J."/>
            <person name="Martinez D."/>
        </authorList>
    </citation>
    <scope>NUCLEOTIDE SEQUENCE [LARGE SCALE GENOMIC DNA]</scope>
    <source>
        <strain>Welgevonden</strain>
    </source>
</reference>
<keyword id="KW-0963">Cytoplasm</keyword>
<keyword id="KW-0444">Lipid biosynthesis</keyword>
<keyword id="KW-0443">Lipid metabolism</keyword>
<keyword id="KW-0520">NAD</keyword>
<keyword id="KW-0521">NADP</keyword>
<keyword id="KW-0547">Nucleotide-binding</keyword>
<keyword id="KW-0560">Oxidoreductase</keyword>
<keyword id="KW-0594">Phospholipid biosynthesis</keyword>
<keyword id="KW-1208">Phospholipid metabolism</keyword>
<proteinExistence type="inferred from homology"/>
<gene>
    <name evidence="1" type="primary">gpsA</name>
    <name type="ordered locus">Erum6600</name>
    <name type="ordered locus">ERWE_CDS_06920</name>
</gene>
<sequence>MKISILGAGSFGTAIAIALSAHGISVNLWGRDHRNTTHINTYRKNLKYLPTYHLPDNIYATSNIDEVLSDNNTCIILTIPTQQLRTICTQIQHKQHMCKNTPILICSKGIEITSLKFPSEIAEEILQYNPIFILSGPSFAKEIAEHLPCSIVLAGDNKELGESLIEKISNDVLKIIYHQDIIGVQIGAALKNIIAIACGIIAGKNLGNNAVATVITKGMNEIKTLYIAKNHSIDLHTLIGPSCLGDLILTCTTEHSRNMAFGLEIGKGRNINTLIDHNLKLVEGTSTVKPLISLAKKLNVELPICISIYNLLHENISLDKAISNILS</sequence>
<protein>
    <recommendedName>
        <fullName evidence="1">Glycerol-3-phosphate dehydrogenase [NAD(P)+]</fullName>
        <ecNumber evidence="1">1.1.1.94</ecNumber>
    </recommendedName>
    <alternativeName>
        <fullName evidence="1">NAD(P)(+)-dependent glycerol-3-phosphate dehydrogenase</fullName>
    </alternativeName>
    <alternativeName>
        <fullName evidence="1">NAD(P)H-dependent dihydroxyacetone-phosphate reductase</fullName>
    </alternativeName>
</protein>
<organism>
    <name type="scientific">Ehrlichia ruminantium (strain Welgevonden)</name>
    <dbReference type="NCBI Taxonomy" id="254945"/>
    <lineage>
        <taxon>Bacteria</taxon>
        <taxon>Pseudomonadati</taxon>
        <taxon>Pseudomonadota</taxon>
        <taxon>Alphaproteobacteria</taxon>
        <taxon>Rickettsiales</taxon>
        <taxon>Anaplasmataceae</taxon>
        <taxon>Ehrlichia</taxon>
    </lineage>
</organism>
<evidence type="ECO:0000255" key="1">
    <source>
        <dbReference type="HAMAP-Rule" id="MF_00394"/>
    </source>
</evidence>
<name>GPDA_EHRRW</name>
<feature type="chain" id="PRO_0000255311" description="Glycerol-3-phosphate dehydrogenase [NAD(P)+]">
    <location>
        <begin position="1"/>
        <end position="327"/>
    </location>
</feature>
<feature type="active site" description="Proton acceptor" evidence="1">
    <location>
        <position position="191"/>
    </location>
</feature>
<feature type="binding site" evidence="1">
    <location>
        <position position="10"/>
    </location>
    <ligand>
        <name>NADPH</name>
        <dbReference type="ChEBI" id="CHEBI:57783"/>
    </ligand>
</feature>
<feature type="binding site" evidence="1">
    <location>
        <position position="11"/>
    </location>
    <ligand>
        <name>NADPH</name>
        <dbReference type="ChEBI" id="CHEBI:57783"/>
    </ligand>
</feature>
<feature type="binding site" evidence="1">
    <location>
        <position position="31"/>
    </location>
    <ligand>
        <name>NADPH</name>
        <dbReference type="ChEBI" id="CHEBI:57783"/>
    </ligand>
</feature>
<feature type="binding site" evidence="1">
    <location>
        <position position="108"/>
    </location>
    <ligand>
        <name>NADPH</name>
        <dbReference type="ChEBI" id="CHEBI:57783"/>
    </ligand>
</feature>
<feature type="binding site" evidence="1">
    <location>
        <position position="108"/>
    </location>
    <ligand>
        <name>sn-glycerol 3-phosphate</name>
        <dbReference type="ChEBI" id="CHEBI:57597"/>
    </ligand>
</feature>
<feature type="binding site" evidence="1">
    <location>
        <position position="136"/>
    </location>
    <ligand>
        <name>sn-glycerol 3-phosphate</name>
        <dbReference type="ChEBI" id="CHEBI:57597"/>
    </ligand>
</feature>
<feature type="binding site" evidence="1">
    <location>
        <position position="138"/>
    </location>
    <ligand>
        <name>sn-glycerol 3-phosphate</name>
        <dbReference type="ChEBI" id="CHEBI:57597"/>
    </ligand>
</feature>
<feature type="binding site" evidence="1">
    <location>
        <position position="140"/>
    </location>
    <ligand>
        <name>NADPH</name>
        <dbReference type="ChEBI" id="CHEBI:57783"/>
    </ligand>
</feature>
<feature type="binding site" evidence="1">
    <location>
        <position position="191"/>
    </location>
    <ligand>
        <name>sn-glycerol 3-phosphate</name>
        <dbReference type="ChEBI" id="CHEBI:57597"/>
    </ligand>
</feature>
<feature type="binding site" evidence="1">
    <location>
        <position position="246"/>
    </location>
    <ligand>
        <name>sn-glycerol 3-phosphate</name>
        <dbReference type="ChEBI" id="CHEBI:57597"/>
    </ligand>
</feature>
<feature type="binding site" evidence="1">
    <location>
        <position position="256"/>
    </location>
    <ligand>
        <name>sn-glycerol 3-phosphate</name>
        <dbReference type="ChEBI" id="CHEBI:57597"/>
    </ligand>
</feature>
<feature type="binding site" evidence="1">
    <location>
        <position position="257"/>
    </location>
    <ligand>
        <name>NADPH</name>
        <dbReference type="ChEBI" id="CHEBI:57783"/>
    </ligand>
</feature>
<feature type="binding site" evidence="1">
    <location>
        <position position="257"/>
    </location>
    <ligand>
        <name>sn-glycerol 3-phosphate</name>
        <dbReference type="ChEBI" id="CHEBI:57597"/>
    </ligand>
</feature>
<feature type="binding site" evidence="1">
    <location>
        <position position="258"/>
    </location>
    <ligand>
        <name>sn-glycerol 3-phosphate</name>
        <dbReference type="ChEBI" id="CHEBI:57597"/>
    </ligand>
</feature>
<feature type="binding site" evidence="1">
    <location>
        <position position="281"/>
    </location>
    <ligand>
        <name>NADPH</name>
        <dbReference type="ChEBI" id="CHEBI:57783"/>
    </ligand>
</feature>
<feature type="binding site" evidence="1">
    <location>
        <position position="283"/>
    </location>
    <ligand>
        <name>NADPH</name>
        <dbReference type="ChEBI" id="CHEBI:57783"/>
    </ligand>
</feature>
<comment type="function">
    <text evidence="1">Catalyzes the reduction of the glycolytic intermediate dihydroxyacetone phosphate (DHAP) to sn-glycerol 3-phosphate (G3P), the key precursor for phospholipid synthesis.</text>
</comment>
<comment type="catalytic activity">
    <reaction evidence="1">
        <text>sn-glycerol 3-phosphate + NAD(+) = dihydroxyacetone phosphate + NADH + H(+)</text>
        <dbReference type="Rhea" id="RHEA:11092"/>
        <dbReference type="ChEBI" id="CHEBI:15378"/>
        <dbReference type="ChEBI" id="CHEBI:57540"/>
        <dbReference type="ChEBI" id="CHEBI:57597"/>
        <dbReference type="ChEBI" id="CHEBI:57642"/>
        <dbReference type="ChEBI" id="CHEBI:57945"/>
        <dbReference type="EC" id="1.1.1.94"/>
    </reaction>
    <physiologicalReaction direction="right-to-left" evidence="1">
        <dbReference type="Rhea" id="RHEA:11094"/>
    </physiologicalReaction>
</comment>
<comment type="catalytic activity">
    <reaction evidence="1">
        <text>sn-glycerol 3-phosphate + NADP(+) = dihydroxyacetone phosphate + NADPH + H(+)</text>
        <dbReference type="Rhea" id="RHEA:11096"/>
        <dbReference type="ChEBI" id="CHEBI:15378"/>
        <dbReference type="ChEBI" id="CHEBI:57597"/>
        <dbReference type="ChEBI" id="CHEBI:57642"/>
        <dbReference type="ChEBI" id="CHEBI:57783"/>
        <dbReference type="ChEBI" id="CHEBI:58349"/>
        <dbReference type="EC" id="1.1.1.94"/>
    </reaction>
    <physiologicalReaction direction="right-to-left" evidence="1">
        <dbReference type="Rhea" id="RHEA:11098"/>
    </physiologicalReaction>
</comment>
<comment type="pathway">
    <text evidence="1">Membrane lipid metabolism; glycerophospholipid metabolism.</text>
</comment>
<comment type="subcellular location">
    <subcellularLocation>
        <location evidence="1">Cytoplasm</location>
    </subcellularLocation>
</comment>
<comment type="similarity">
    <text evidence="1">Belongs to the NAD-dependent glycerol-3-phosphate dehydrogenase family.</text>
</comment>